<protein>
    <recommendedName>
        <fullName evidence="1">Large ribosomal subunit protein bL36B</fullName>
    </recommendedName>
    <alternativeName>
        <fullName evidence="2">50S ribosomal protein L36 2</fullName>
    </alternativeName>
</protein>
<dbReference type="EMBL" id="AM711867">
    <property type="protein sequence ID" value="CAN00032.1"/>
    <property type="molecule type" value="Genomic_DNA"/>
</dbReference>
<dbReference type="SMR" id="A5CLV7"/>
<dbReference type="KEGG" id="cmi:CMM_0025"/>
<dbReference type="eggNOG" id="COG0257">
    <property type="taxonomic scope" value="Bacteria"/>
</dbReference>
<dbReference type="HOGENOM" id="CLU_135723_3_1_11"/>
<dbReference type="OrthoDB" id="9801558at2"/>
<dbReference type="Proteomes" id="UP000001564">
    <property type="component" value="Chromosome"/>
</dbReference>
<dbReference type="GO" id="GO:1990904">
    <property type="term" value="C:ribonucleoprotein complex"/>
    <property type="evidence" value="ECO:0007669"/>
    <property type="project" value="UniProtKB-KW"/>
</dbReference>
<dbReference type="GO" id="GO:0005840">
    <property type="term" value="C:ribosome"/>
    <property type="evidence" value="ECO:0007669"/>
    <property type="project" value="UniProtKB-KW"/>
</dbReference>
<dbReference type="GO" id="GO:0003735">
    <property type="term" value="F:structural constituent of ribosome"/>
    <property type="evidence" value="ECO:0007669"/>
    <property type="project" value="InterPro"/>
</dbReference>
<dbReference type="GO" id="GO:0006412">
    <property type="term" value="P:translation"/>
    <property type="evidence" value="ECO:0007669"/>
    <property type="project" value="UniProtKB-UniRule"/>
</dbReference>
<dbReference type="HAMAP" id="MF_00251">
    <property type="entry name" value="Ribosomal_bL36"/>
    <property type="match status" value="1"/>
</dbReference>
<dbReference type="InterPro" id="IPR000473">
    <property type="entry name" value="Ribosomal_bL36"/>
</dbReference>
<dbReference type="InterPro" id="IPR035977">
    <property type="entry name" value="Ribosomal_bL36_sp"/>
</dbReference>
<dbReference type="InterPro" id="IPR047621">
    <property type="entry name" value="Ribosomal_L36_bact"/>
</dbReference>
<dbReference type="NCBIfam" id="NF002021">
    <property type="entry name" value="PRK00831.1"/>
    <property type="match status" value="1"/>
</dbReference>
<dbReference type="NCBIfam" id="TIGR01022">
    <property type="entry name" value="rpmJ_bact"/>
    <property type="match status" value="1"/>
</dbReference>
<dbReference type="PANTHER" id="PTHR47781">
    <property type="entry name" value="50S RIBOSOMAL PROTEIN L36 2"/>
    <property type="match status" value="1"/>
</dbReference>
<dbReference type="PANTHER" id="PTHR47781:SF1">
    <property type="entry name" value="LARGE RIBOSOMAL SUBUNIT PROTEIN BL36B"/>
    <property type="match status" value="1"/>
</dbReference>
<dbReference type="Pfam" id="PF00444">
    <property type="entry name" value="Ribosomal_L36"/>
    <property type="match status" value="1"/>
</dbReference>
<dbReference type="SUPFAM" id="SSF57840">
    <property type="entry name" value="Ribosomal protein L36"/>
    <property type="match status" value="1"/>
</dbReference>
<sequence>MKVRNSIKALKKLPGAQVVRRRGRVFVINKQNPRNKARQG</sequence>
<proteinExistence type="inferred from homology"/>
<gene>
    <name evidence="1" type="primary">rpmJ2</name>
    <name type="ordered locus">CMM_0025</name>
</gene>
<feature type="chain" id="PRO_0000344659" description="Large ribosomal subunit protein bL36B">
    <location>
        <begin position="1"/>
        <end position="40"/>
    </location>
</feature>
<name>RL362_CLAM3</name>
<comment type="similarity">
    <text evidence="1">Belongs to the bacterial ribosomal protein bL36 family.</text>
</comment>
<accession>A5CLV7</accession>
<reference key="1">
    <citation type="journal article" date="2008" name="J. Bacteriol.">
        <title>The genome sequence of the tomato-pathogenic actinomycete Clavibacter michiganensis subsp. michiganensis NCPPB382 reveals a large island involved in pathogenicity.</title>
        <authorList>
            <person name="Gartemann K.-H."/>
            <person name="Abt B."/>
            <person name="Bekel T."/>
            <person name="Burger A."/>
            <person name="Engemann J."/>
            <person name="Fluegel M."/>
            <person name="Gaigalat L."/>
            <person name="Goesmann A."/>
            <person name="Graefen I."/>
            <person name="Kalinowski J."/>
            <person name="Kaup O."/>
            <person name="Kirchner O."/>
            <person name="Krause L."/>
            <person name="Linke B."/>
            <person name="McHardy A."/>
            <person name="Meyer F."/>
            <person name="Pohle S."/>
            <person name="Rueckert C."/>
            <person name="Schneiker S."/>
            <person name="Zellermann E.-M."/>
            <person name="Puehler A."/>
            <person name="Eichenlaub R."/>
            <person name="Kaiser O."/>
            <person name="Bartels D."/>
        </authorList>
    </citation>
    <scope>NUCLEOTIDE SEQUENCE [LARGE SCALE GENOMIC DNA]</scope>
    <source>
        <strain>NCPPB 382</strain>
    </source>
</reference>
<organism>
    <name type="scientific">Clavibacter michiganensis subsp. michiganensis (strain NCPPB 382)</name>
    <dbReference type="NCBI Taxonomy" id="443906"/>
    <lineage>
        <taxon>Bacteria</taxon>
        <taxon>Bacillati</taxon>
        <taxon>Actinomycetota</taxon>
        <taxon>Actinomycetes</taxon>
        <taxon>Micrococcales</taxon>
        <taxon>Microbacteriaceae</taxon>
        <taxon>Clavibacter</taxon>
    </lineage>
</organism>
<keyword id="KW-0687">Ribonucleoprotein</keyword>
<keyword id="KW-0689">Ribosomal protein</keyword>
<evidence type="ECO:0000255" key="1">
    <source>
        <dbReference type="HAMAP-Rule" id="MF_00251"/>
    </source>
</evidence>
<evidence type="ECO:0000305" key="2"/>